<feature type="initiator methionine" description="Removed" evidence="17">
    <location>
        <position position="1"/>
    </location>
</feature>
<feature type="chain" id="PRO_0000075313" description="Peptidyl-prolyl cis-trans isomerase">
    <location>
        <begin position="2"/>
        <end position="411"/>
    </location>
</feature>
<feature type="domain" description="PPIase FKBP-type" evidence="2">
    <location>
        <begin position="324"/>
        <end position="411"/>
    </location>
</feature>
<feature type="region of interest" description="Disordered" evidence="3">
    <location>
        <begin position="54"/>
        <end position="127"/>
    </location>
</feature>
<feature type="region of interest" description="Disordered" evidence="3">
    <location>
        <begin position="160"/>
        <end position="302"/>
    </location>
</feature>
<feature type="short sequence motif" description="Nuclear localization signal" evidence="1">
    <location>
        <begin position="256"/>
        <end position="271"/>
    </location>
</feature>
<feature type="compositionally biased region" description="Acidic residues" evidence="3">
    <location>
        <begin position="61"/>
        <end position="87"/>
    </location>
</feature>
<feature type="compositionally biased region" description="Acidic residues" evidence="3">
    <location>
        <begin position="103"/>
        <end position="118"/>
    </location>
</feature>
<feature type="compositionally biased region" description="Acidic residues" evidence="3">
    <location>
        <begin position="173"/>
        <end position="242"/>
    </location>
</feature>
<feature type="compositionally biased region" description="Basic residues" evidence="3">
    <location>
        <begin position="251"/>
        <end position="260"/>
    </location>
</feature>
<feature type="compositionally biased region" description="Basic and acidic residues" evidence="3">
    <location>
        <begin position="261"/>
        <end position="296"/>
    </location>
</feature>
<feature type="modified residue" description="N-acetylserine" evidence="17">
    <location>
        <position position="2"/>
    </location>
</feature>
<feature type="modified residue" description="Phosphoserine" evidence="14 15 16">
    <location>
        <position position="80"/>
    </location>
</feature>
<feature type="modified residue" description="Phosphoserine" evidence="14 15 16">
    <location>
        <position position="81"/>
    </location>
</feature>
<feature type="modified residue" description="Phosphothreonine" evidence="16">
    <location>
        <position position="89"/>
    </location>
</feature>
<feature type="modified residue" description="Phosphotyrosine; by CK2" evidence="9">
    <location>
        <position position="184"/>
    </location>
</feature>
<feature type="modified residue" description="Phosphoserine; by CK2" evidence="9">
    <location>
        <position position="186"/>
    </location>
</feature>
<feature type="sequence conflict" description="In Ref. 1; AAB04165." evidence="13" ref="1">
    <original>L</original>
    <variation>P</variation>
    <location>
        <position position="122"/>
    </location>
</feature>
<feature type="sequence conflict" description="In Ref. 1." evidence="13" ref="1">
    <original>E</original>
    <variation>EEE</variation>
    <location>
        <position position="240"/>
    </location>
</feature>
<feature type="sequence conflict" description="In Ref. 1; AAB04165." evidence="13" ref="1">
    <original>L</original>
    <variation>F</variation>
    <location>
        <position position="335"/>
    </location>
</feature>
<evidence type="ECO:0000255" key="1"/>
<evidence type="ECO:0000255" key="2">
    <source>
        <dbReference type="PROSITE-ProRule" id="PRU00277"/>
    </source>
</evidence>
<evidence type="ECO:0000256" key="3">
    <source>
        <dbReference type="SAM" id="MobiDB-lite"/>
    </source>
</evidence>
<evidence type="ECO:0000269" key="4">
    <source>
    </source>
</evidence>
<evidence type="ECO:0000269" key="5">
    <source>
    </source>
</evidence>
<evidence type="ECO:0000269" key="6">
    <source>
    </source>
</evidence>
<evidence type="ECO:0000269" key="7">
    <source>
    </source>
</evidence>
<evidence type="ECO:0000269" key="8">
    <source>
    </source>
</evidence>
<evidence type="ECO:0000269" key="9">
    <source>
    </source>
</evidence>
<evidence type="ECO:0000303" key="10">
    <source>
    </source>
</evidence>
<evidence type="ECO:0000303" key="11">
    <source>
    </source>
</evidence>
<evidence type="ECO:0000303" key="12">
    <source>
    </source>
</evidence>
<evidence type="ECO:0000305" key="13"/>
<evidence type="ECO:0007744" key="14">
    <source>
    </source>
</evidence>
<evidence type="ECO:0007744" key="15">
    <source>
    </source>
</evidence>
<evidence type="ECO:0007744" key="16">
    <source>
    </source>
</evidence>
<evidence type="ECO:0007744" key="17">
    <source>
    </source>
</evidence>
<reference key="1">
    <citation type="journal article" date="1994" name="FEBS Lett.">
        <title>Purification of FKBP-70, a novel immunophilin from Saccharomyces cerevisiae, and cloning of its structural gene, FPR3.</title>
        <authorList>
            <person name="Manning-Krieg U.C."/>
            <person name="Henriquez R."/>
            <person name="Cammas F."/>
            <person name="Graff P."/>
            <person name="Gaveriaux S."/>
            <person name="Movva N.R."/>
        </authorList>
    </citation>
    <scope>NUCLEOTIDE SEQUENCE [GENOMIC DNA]</scope>
    <scope>FUNCTION</scope>
    <scope>CATALYTIC ACTIVITY</scope>
</reference>
<reference key="2">
    <citation type="journal article" date="1994" name="J. Cell Biol.">
        <title>Yeast NPI46 encodes a novel prolyl cis-trans isomerase that is located in the nucleolus.</title>
        <authorList>
            <person name="Shan X."/>
            <person name="Xue Z."/>
            <person name="Melese T."/>
        </authorList>
    </citation>
    <scope>NUCLEOTIDE SEQUENCE [GENOMIC DNA]</scope>
    <scope>FUNCTION</scope>
    <scope>CATALYTIC ACTIVITY</scope>
    <scope>SUBCELLULAR LOCATION</scope>
    <source>
        <strain>ATCC 204508 / S288c</strain>
    </source>
</reference>
<reference key="3">
    <citation type="journal article" date="1994" name="J. Cell Biol.">
        <title>A novel FK506- and rapamycin-binding protein (FPR3 gene product) in the yeast Saccharomyces cerevisiae is a proline rotamase localized to the nucleolus.</title>
        <authorList>
            <person name="Benton B.M."/>
            <person name="Zang J.-H."/>
            <person name="Thorner J."/>
        </authorList>
    </citation>
    <scope>NUCLEOTIDE SEQUENCE [GENOMIC DNA]</scope>
    <scope>FUNCTION</scope>
    <scope>CATALYTIC ACTIVITY</scope>
    <source>
        <strain>YNN 214</strain>
    </source>
</reference>
<reference key="4">
    <citation type="journal article" date="1997" name="Nature">
        <title>The nucleotide sequence of Saccharomyces cerevisiae chromosome XIII.</title>
        <authorList>
            <person name="Bowman S."/>
            <person name="Churcher C.M."/>
            <person name="Badcock K."/>
            <person name="Brown D."/>
            <person name="Chillingworth T."/>
            <person name="Connor R."/>
            <person name="Dedman K."/>
            <person name="Devlin K."/>
            <person name="Gentles S."/>
            <person name="Hamlin N."/>
            <person name="Hunt S."/>
            <person name="Jagels K."/>
            <person name="Lye G."/>
            <person name="Moule S."/>
            <person name="Odell C."/>
            <person name="Pearson D."/>
            <person name="Rajandream M.A."/>
            <person name="Rice P."/>
            <person name="Skelton J."/>
            <person name="Walsh S.V."/>
            <person name="Whitehead S."/>
            <person name="Barrell B.G."/>
        </authorList>
    </citation>
    <scope>NUCLEOTIDE SEQUENCE [LARGE SCALE GENOMIC DNA]</scope>
    <source>
        <strain>ATCC 204508 / S288c</strain>
    </source>
</reference>
<reference key="5">
    <citation type="journal article" date="2014" name="G3 (Bethesda)">
        <title>The reference genome sequence of Saccharomyces cerevisiae: Then and now.</title>
        <authorList>
            <person name="Engel S.R."/>
            <person name="Dietrich F.S."/>
            <person name="Fisk D.G."/>
            <person name="Binkley G."/>
            <person name="Balakrishnan R."/>
            <person name="Costanzo M.C."/>
            <person name="Dwight S.S."/>
            <person name="Hitz B.C."/>
            <person name="Karra K."/>
            <person name="Nash R.S."/>
            <person name="Weng S."/>
            <person name="Wong E.D."/>
            <person name="Lloyd P."/>
            <person name="Skrzypek M.S."/>
            <person name="Miyasato S.R."/>
            <person name="Simison M."/>
            <person name="Cherry J.M."/>
        </authorList>
    </citation>
    <scope>GENOME REANNOTATION</scope>
    <source>
        <strain>ATCC 204508 / S288c</strain>
    </source>
</reference>
<reference key="6">
    <citation type="journal article" date="2007" name="Genome Res.">
        <title>Approaching a complete repository of sequence-verified protein-encoding clones for Saccharomyces cerevisiae.</title>
        <authorList>
            <person name="Hu Y."/>
            <person name="Rolfs A."/>
            <person name="Bhullar B."/>
            <person name="Murthy T.V.S."/>
            <person name="Zhu C."/>
            <person name="Berger M.F."/>
            <person name="Camargo A.A."/>
            <person name="Kelley F."/>
            <person name="McCarron S."/>
            <person name="Jepson D."/>
            <person name="Richardson A."/>
            <person name="Raphael J."/>
            <person name="Moreira D."/>
            <person name="Taycher E."/>
            <person name="Zuo D."/>
            <person name="Mohr S."/>
            <person name="Kane M.F."/>
            <person name="Williamson J."/>
            <person name="Simpson A.J.G."/>
            <person name="Bulyk M.L."/>
            <person name="Harlow E."/>
            <person name="Marsischky G."/>
            <person name="Kolodner R.D."/>
            <person name="LaBaer J."/>
        </authorList>
    </citation>
    <scope>NUCLEOTIDE SEQUENCE [GENOMIC DNA]</scope>
    <source>
        <strain>ATCC 204508 / S288c</strain>
    </source>
</reference>
<reference key="7">
    <citation type="journal article" date="1997" name="J. Biol. Chem.">
        <title>Casein kinase II catalyzes tyrosine phosphorylation of the yeast nucleolar immunophilin Fpr3.</title>
        <authorList>
            <person name="Wilson L.K."/>
            <person name="Dhillon N."/>
            <person name="Thorner J."/>
            <person name="Martin G.S."/>
        </authorList>
    </citation>
    <scope>PHOSPHORYLATION AT TYR-184 AND SER-186</scope>
</reference>
<reference key="8">
    <citation type="journal article" date="2003" name="Nature">
        <title>Global analysis of protein expression in yeast.</title>
        <authorList>
            <person name="Ghaemmaghami S."/>
            <person name="Huh W.-K."/>
            <person name="Bower K."/>
            <person name="Howson R.W."/>
            <person name="Belle A."/>
            <person name="Dephoure N."/>
            <person name="O'Shea E.K."/>
            <person name="Weissman J.S."/>
        </authorList>
    </citation>
    <scope>LEVEL OF PROTEIN EXPRESSION [LARGE SCALE ANALYSIS]</scope>
</reference>
<reference key="9">
    <citation type="journal article" date="2005" name="Biochem. J.">
        <title>Nop53p is a novel nucleolar 60S ribosomal subunit biogenesis protein.</title>
        <authorList>
            <person name="Sydorskyy Y."/>
            <person name="Dilworth D.J."/>
            <person name="Halloran B."/>
            <person name="Yi E.C."/>
            <person name="Makhnevych T."/>
            <person name="Wozniak R.W."/>
            <person name="Aitchison J.D."/>
        </authorList>
    </citation>
    <scope>INTERACTION WITH NOP53</scope>
    <scope>IDENTIFICATION BY MASS SPECTROMETRY</scope>
</reference>
<reference key="10">
    <citation type="journal article" date="2007" name="J. Proteome Res.">
        <title>Large-scale phosphorylation analysis of alpha-factor-arrested Saccharomyces cerevisiae.</title>
        <authorList>
            <person name="Li X."/>
            <person name="Gerber S.A."/>
            <person name="Rudner A.D."/>
            <person name="Beausoleil S.A."/>
            <person name="Haas W."/>
            <person name="Villen J."/>
            <person name="Elias J.E."/>
            <person name="Gygi S.P."/>
        </authorList>
    </citation>
    <scope>PHOSPHORYLATION [LARGE SCALE ANALYSIS] AT SER-80 AND SER-81</scope>
    <scope>IDENTIFICATION BY MASS SPECTROMETRY [LARGE SCALE ANALYSIS]</scope>
    <source>
        <strain>ADR376</strain>
    </source>
</reference>
<reference key="11">
    <citation type="journal article" date="2008" name="Mol. Cell. Proteomics">
        <title>A multidimensional chromatography technology for in-depth phosphoproteome analysis.</title>
        <authorList>
            <person name="Albuquerque C.P."/>
            <person name="Smolka M.B."/>
            <person name="Payne S.H."/>
            <person name="Bafna V."/>
            <person name="Eng J."/>
            <person name="Zhou H."/>
        </authorList>
    </citation>
    <scope>PHOSPHORYLATION [LARGE SCALE ANALYSIS] AT SER-80 AND SER-81</scope>
    <scope>IDENTIFICATION BY MASS SPECTROMETRY [LARGE SCALE ANALYSIS]</scope>
</reference>
<reference key="12">
    <citation type="journal article" date="2009" name="Science">
        <title>Global analysis of Cdk1 substrate phosphorylation sites provides insights into evolution.</title>
        <authorList>
            <person name="Holt L.J."/>
            <person name="Tuch B.B."/>
            <person name="Villen J."/>
            <person name="Johnson A.D."/>
            <person name="Gygi S.P."/>
            <person name="Morgan D.O."/>
        </authorList>
    </citation>
    <scope>PHOSPHORYLATION [LARGE SCALE ANALYSIS] AT SER-80; SER-81 AND THR-89</scope>
    <scope>IDENTIFICATION BY MASS SPECTROMETRY [LARGE SCALE ANALYSIS]</scope>
</reference>
<reference key="13">
    <citation type="journal article" date="2012" name="Proc. Natl. Acad. Sci. U.S.A.">
        <title>N-terminal acetylome analyses and functional insights of the N-terminal acetyltransferase NatB.</title>
        <authorList>
            <person name="Van Damme P."/>
            <person name="Lasa M."/>
            <person name="Polevoda B."/>
            <person name="Gazquez C."/>
            <person name="Elosegui-Artola A."/>
            <person name="Kim D.S."/>
            <person name="De Juan-Pardo E."/>
            <person name="Demeyer K."/>
            <person name="Hole K."/>
            <person name="Larrea E."/>
            <person name="Timmerman E."/>
            <person name="Prieto J."/>
            <person name="Arnesen T."/>
            <person name="Sherman F."/>
            <person name="Gevaert K."/>
            <person name="Aldabe R."/>
        </authorList>
    </citation>
    <scope>ACETYLATION [LARGE SCALE ANALYSIS] AT SER-2</scope>
    <scope>CLEAVAGE OF INITIATOR METHIONINE [LARGE SCALE ANALYSIS]</scope>
    <scope>IDENTIFICATION BY MASS SPECTROMETRY [LARGE SCALE ANALYSIS]</scope>
</reference>
<sequence>MSDLLPLATYSLNVEPYTPVPAIDVTMPITVRITMAALNPEAIDEENKPSTLRIIKRNPDFEDDDFLGGDFDEDEIDEESSEEEEEEKTQKKKKSKGKKAESESEDDEEDDDEDDEFQESVLLTLSPEAQYQQSLDLTITPEEEVQFIVTGSYAISLSGNYVKHPFDTPMGVEGEDEDEDADIYDSEDYDLTPDEDEIIGDDMDDLDDEEEEEVRIEEVQEEDEEDNDGEEEQEEEEEEEQKEEVKPEPKKSKKEKKRKHEEKEEEKKAKKVKKVEFKKDLEEGPTKPKSKKEQDKHKPKSKVLEGGIVIEDRTIGDGPQAKRGARVGMRYIGKLKNGKVFDKNTSGKPFAFKLGRGEVIKGWDIGVAGMSVGGERRIIIPAPYAYGKQALPGIPANSELTFDVKLVSMKN</sequence>
<protein>
    <recommendedName>
        <fullName evidence="11">Peptidyl-prolyl cis-trans isomerase</fullName>
        <shortName evidence="11">PPIase</shortName>
        <ecNumber evidence="6 7 8">5.2.1.8</ecNumber>
    </recommendedName>
    <alternativeName>
        <fullName>FK506-binding nuclear protein</fullName>
    </alternativeName>
    <alternativeName>
        <fullName evidence="11">FKBP-70</fullName>
    </alternativeName>
    <alternativeName>
        <fullName evidence="12">Nucleolar proline isomerase</fullName>
    </alternativeName>
    <alternativeName>
        <fullName evidence="13">Proline rotamase</fullName>
    </alternativeName>
</protein>
<accession>P38911</accession>
<accession>D6W0K9</accession>
<gene>
    <name evidence="10" type="primary">FPR3</name>
    <name evidence="12" type="synonym">NPI46</name>
    <name type="ordered locus">YML074C</name>
</gene>
<dbReference type="EC" id="5.2.1.8" evidence="6 7 8"/>
<dbReference type="EMBL" id="L34569">
    <property type="protein sequence ID" value="AAB04165.1"/>
    <property type="molecule type" value="Genomic_DNA"/>
</dbReference>
<dbReference type="EMBL" id="X79379">
    <property type="protein sequence ID" value="CAA55924.1"/>
    <property type="molecule type" value="Genomic_DNA"/>
</dbReference>
<dbReference type="EMBL" id="S73876">
    <property type="protein sequence ID" value="AAB31995.1"/>
    <property type="molecule type" value="Genomic_DNA"/>
</dbReference>
<dbReference type="EMBL" id="Z46373">
    <property type="protein sequence ID" value="CAA86504.1"/>
    <property type="molecule type" value="Genomic_DNA"/>
</dbReference>
<dbReference type="EMBL" id="AY693136">
    <property type="protein sequence ID" value="AAT93155.1"/>
    <property type="molecule type" value="Genomic_DNA"/>
</dbReference>
<dbReference type="EMBL" id="BK006946">
    <property type="protein sequence ID" value="DAA09823.1"/>
    <property type="molecule type" value="Genomic_DNA"/>
</dbReference>
<dbReference type="PIR" id="S48647">
    <property type="entry name" value="S48647"/>
</dbReference>
<dbReference type="RefSeq" id="NP_013637.1">
    <property type="nucleotide sequence ID" value="NM_001182433.1"/>
</dbReference>
<dbReference type="SMR" id="P38911"/>
<dbReference type="BioGRID" id="35067">
    <property type="interactions" value="187"/>
</dbReference>
<dbReference type="DIP" id="DIP-6578N"/>
<dbReference type="FunCoup" id="P38911">
    <property type="interactions" value="677"/>
</dbReference>
<dbReference type="IntAct" id="P38911">
    <property type="interactions" value="106"/>
</dbReference>
<dbReference type="MINT" id="P38911"/>
<dbReference type="STRING" id="4932.YML074C"/>
<dbReference type="GlyGen" id="P38911">
    <property type="glycosylation" value="1 site"/>
</dbReference>
<dbReference type="iPTMnet" id="P38911"/>
<dbReference type="PaxDb" id="4932-YML074C"/>
<dbReference type="PeptideAtlas" id="P38911"/>
<dbReference type="EnsemblFungi" id="YML074C_mRNA">
    <property type="protein sequence ID" value="YML074C"/>
    <property type="gene ID" value="YML074C"/>
</dbReference>
<dbReference type="GeneID" id="854901"/>
<dbReference type="KEGG" id="sce:YML074C"/>
<dbReference type="AGR" id="SGD:S000004539"/>
<dbReference type="SGD" id="S000004539">
    <property type="gene designation" value="FPR3"/>
</dbReference>
<dbReference type="VEuPathDB" id="FungiDB:YML074C"/>
<dbReference type="eggNOG" id="KOG0552">
    <property type="taxonomic scope" value="Eukaryota"/>
</dbReference>
<dbReference type="GeneTree" id="ENSGT00940000176659"/>
<dbReference type="HOGENOM" id="CLU_022297_3_1_1"/>
<dbReference type="InParanoid" id="P38911"/>
<dbReference type="OMA" id="CPPHMAY"/>
<dbReference type="OrthoDB" id="77911at2759"/>
<dbReference type="BioCyc" id="YEAST:YML074C-MONOMER"/>
<dbReference type="BioGRID-ORCS" id="854901">
    <property type="hits" value="1 hit in 10 CRISPR screens"/>
</dbReference>
<dbReference type="CD-CODE" id="BDAE0F88">
    <property type="entry name" value="Nucleolus"/>
</dbReference>
<dbReference type="CD-CODE" id="E03F929F">
    <property type="entry name" value="Stress granule"/>
</dbReference>
<dbReference type="PRO" id="PR:P38911"/>
<dbReference type="Proteomes" id="UP000002311">
    <property type="component" value="Chromosome XIII"/>
</dbReference>
<dbReference type="RNAct" id="P38911">
    <property type="molecule type" value="protein"/>
</dbReference>
<dbReference type="GO" id="GO:0000785">
    <property type="term" value="C:chromatin"/>
    <property type="evidence" value="ECO:0000318"/>
    <property type="project" value="GO_Central"/>
</dbReference>
<dbReference type="GO" id="GO:0005730">
    <property type="term" value="C:nucleolus"/>
    <property type="evidence" value="ECO:0000314"/>
    <property type="project" value="SGD"/>
</dbReference>
<dbReference type="GO" id="GO:0005634">
    <property type="term" value="C:nucleus"/>
    <property type="evidence" value="ECO:0000314"/>
    <property type="project" value="SGD"/>
</dbReference>
<dbReference type="GO" id="GO:0005527">
    <property type="term" value="F:macrolide binding"/>
    <property type="evidence" value="ECO:0000314"/>
    <property type="project" value="SGD"/>
</dbReference>
<dbReference type="GO" id="GO:0003755">
    <property type="term" value="F:peptidyl-prolyl cis-trans isomerase activity"/>
    <property type="evidence" value="ECO:0000314"/>
    <property type="project" value="SGD"/>
</dbReference>
<dbReference type="GO" id="GO:0051598">
    <property type="term" value="P:meiotic recombination checkpoint signaling"/>
    <property type="evidence" value="ECO:0000314"/>
    <property type="project" value="SGD"/>
</dbReference>
<dbReference type="GO" id="GO:0006334">
    <property type="term" value="P:nucleosome assembly"/>
    <property type="evidence" value="ECO:0000314"/>
    <property type="project" value="SGD"/>
</dbReference>
<dbReference type="FunFam" id="3.10.50.40:FF:000041">
    <property type="entry name" value="FK506-binding nuclear protein"/>
    <property type="match status" value="1"/>
</dbReference>
<dbReference type="Gene3D" id="3.10.50.40">
    <property type="match status" value="1"/>
</dbReference>
<dbReference type="Gene3D" id="2.60.120.340">
    <property type="entry name" value="Nucleoplasmin core domain"/>
    <property type="match status" value="1"/>
</dbReference>
<dbReference type="InterPro" id="IPR041232">
    <property type="entry name" value="NPL"/>
</dbReference>
<dbReference type="InterPro" id="IPR046357">
    <property type="entry name" value="PPIase_dom_sf"/>
</dbReference>
<dbReference type="InterPro" id="IPR001179">
    <property type="entry name" value="PPIase_FKBP_dom"/>
</dbReference>
<dbReference type="InterPro" id="IPR023566">
    <property type="entry name" value="PPIase_Fpr3/Fpr4-like"/>
</dbReference>
<dbReference type="PANTHER" id="PTHR43811:SF19">
    <property type="entry name" value="39 KDA FK506-BINDING NUCLEAR PROTEIN"/>
    <property type="match status" value="1"/>
</dbReference>
<dbReference type="PANTHER" id="PTHR43811">
    <property type="entry name" value="FKBP-TYPE PEPTIDYL-PROLYL CIS-TRANS ISOMERASE FKPA"/>
    <property type="match status" value="1"/>
</dbReference>
<dbReference type="Pfam" id="PF00254">
    <property type="entry name" value="FKBP_C"/>
    <property type="match status" value="1"/>
</dbReference>
<dbReference type="Pfam" id="PF17800">
    <property type="entry name" value="NPL"/>
    <property type="match status" value="1"/>
</dbReference>
<dbReference type="PIRSF" id="PIRSF001473">
    <property type="entry name" value="FK506-bp_FPR3"/>
    <property type="match status" value="1"/>
</dbReference>
<dbReference type="SUPFAM" id="SSF54534">
    <property type="entry name" value="FKBP-like"/>
    <property type="match status" value="1"/>
</dbReference>
<dbReference type="PROSITE" id="PS50059">
    <property type="entry name" value="FKBP_PPIASE"/>
    <property type="match status" value="1"/>
</dbReference>
<comment type="function">
    <text evidence="6 7 8">Proline isomerase that belongs to an abundant class of enzymes that catalyze the cis-trans isomerization of X-Pro peptide bonds and can accelerate the refolding of proline-containing polypeptides (PubMed:7525596, PubMed:7925954, PubMed:8051210). Specifically binds nuclear localization sequences (PubMed:7925954). May be involved in the assembly or folding of ribosomal proteins (PubMed:8051210).</text>
</comment>
<comment type="catalytic activity">
    <reaction evidence="6 7 8">
        <text>[protein]-peptidylproline (omega=180) = [protein]-peptidylproline (omega=0)</text>
        <dbReference type="Rhea" id="RHEA:16237"/>
        <dbReference type="Rhea" id="RHEA-COMP:10747"/>
        <dbReference type="Rhea" id="RHEA-COMP:10748"/>
        <dbReference type="ChEBI" id="CHEBI:83833"/>
        <dbReference type="ChEBI" id="CHEBI:83834"/>
        <dbReference type="EC" id="5.2.1.8"/>
    </reaction>
</comment>
<comment type="activity regulation">
    <text>Inhibited by both FK506 and rapamycin.</text>
</comment>
<comment type="subunit">
    <text evidence="5">Interacts with NOP53.</text>
</comment>
<comment type="interaction">
    <interactant intactId="EBI-6951">
        <id>P38911</id>
    </interactant>
    <interactant intactId="EBI-5644">
        <id>Q12389</id>
        <label>DBP10</label>
    </interactant>
    <organismsDiffer>false</organismsDiffer>
    <experiments>3</experiments>
</comment>
<comment type="interaction">
    <interactant intactId="EBI-6951">
        <id>P38911</id>
    </interactant>
    <interactant intactId="EBI-6289">
        <id>P36049</id>
        <label>EBP2</label>
    </interactant>
    <organismsDiffer>false</organismsDiffer>
    <experiments>3</experiments>
</comment>
<comment type="interaction">
    <interactant intactId="EBI-6951">
        <id>P38911</id>
    </interactant>
    <interactant intactId="EBI-6956">
        <id>Q06205</id>
        <label>FPR4</label>
    </interactant>
    <organismsDiffer>false</organismsDiffer>
    <experiments>5</experiments>
</comment>
<comment type="interaction">
    <interactant intactId="EBI-6951">
        <id>P38911</id>
    </interactant>
    <interactant intactId="EBI-8098">
        <id>P61830</id>
        <label>HHT2</label>
    </interactant>
    <organismsDiffer>false</organismsDiffer>
    <experiments>3</experiments>
</comment>
<comment type="interaction">
    <interactant intactId="EBI-6951">
        <id>P38911</id>
    </interactant>
    <interactant intactId="EBI-22906">
        <id>P43586</id>
        <label>LOC1</label>
    </interactant>
    <organismsDiffer>false</organismsDiffer>
    <experiments>4</experiments>
</comment>
<comment type="interaction">
    <interactant intactId="EBI-6951">
        <id>P38911</id>
    </interactant>
    <interactant intactId="EBI-29395">
        <id>Q12080</id>
        <label>NOP53</label>
    </interactant>
    <organismsDiffer>false</organismsDiffer>
    <experiments>4</experiments>
</comment>
<comment type="interaction">
    <interactant intactId="EBI-6951">
        <id>P38911</id>
    </interactant>
    <interactant intactId="EBI-26762">
        <id>P36080</id>
        <label>RRP14</label>
    </interactant>
    <organismsDiffer>false</organismsDiffer>
    <experiments>3</experiments>
</comment>
<comment type="interaction">
    <interactant intactId="EBI-6951">
        <id>P38911</id>
    </interactant>
    <interactant intactId="EBI-17814">
        <id>P25582</id>
        <label>SPB1</label>
    </interactant>
    <organismsDiffer>false</organismsDiffer>
    <experiments>3</experiments>
</comment>
<comment type="subcellular location">
    <subcellularLocation>
        <location evidence="8">Nucleus</location>
        <location evidence="8">Nucleolus</location>
    </subcellularLocation>
</comment>
<comment type="PTM">
    <text evidence="9">Phosphorylated at tyrosine and dephosphorylated by the phosphotyrosine-specific phosphoprotein phosphatase PTP1.</text>
</comment>
<comment type="miscellaneous">
    <text evidence="4">Present with 9490 molecules/cell in log phase SD medium.</text>
</comment>
<comment type="similarity">
    <text evidence="13">Belongs to the FKBP-type PPIase family. FKBP3/4 subfamily.</text>
</comment>
<name>FKBP3_YEAST</name>
<keyword id="KW-0007">Acetylation</keyword>
<keyword id="KW-0413">Isomerase</keyword>
<keyword id="KW-0539">Nucleus</keyword>
<keyword id="KW-0597">Phosphoprotein</keyword>
<keyword id="KW-1185">Reference proteome</keyword>
<keyword id="KW-0697">Rotamase</keyword>
<proteinExistence type="evidence at protein level"/>
<organism>
    <name type="scientific">Saccharomyces cerevisiae (strain ATCC 204508 / S288c)</name>
    <name type="common">Baker's yeast</name>
    <dbReference type="NCBI Taxonomy" id="559292"/>
    <lineage>
        <taxon>Eukaryota</taxon>
        <taxon>Fungi</taxon>
        <taxon>Dikarya</taxon>
        <taxon>Ascomycota</taxon>
        <taxon>Saccharomycotina</taxon>
        <taxon>Saccharomycetes</taxon>
        <taxon>Saccharomycetales</taxon>
        <taxon>Saccharomycetaceae</taxon>
        <taxon>Saccharomyces</taxon>
    </lineage>
</organism>